<proteinExistence type="inferred from homology"/>
<dbReference type="EMBL" id="AE009442">
    <property type="protein sequence ID" value="AAO29322.1"/>
    <property type="molecule type" value="Genomic_DNA"/>
</dbReference>
<dbReference type="RefSeq" id="WP_011098126.1">
    <property type="nucleotide sequence ID" value="NC_004556.1"/>
</dbReference>
<dbReference type="SMR" id="Q87BH5"/>
<dbReference type="GeneID" id="93905300"/>
<dbReference type="KEGG" id="xft:PD_1478"/>
<dbReference type="HOGENOM" id="CLU_079503_1_1_6"/>
<dbReference type="Proteomes" id="UP000002516">
    <property type="component" value="Chromosome"/>
</dbReference>
<dbReference type="GO" id="GO:0005886">
    <property type="term" value="C:plasma membrane"/>
    <property type="evidence" value="ECO:0007669"/>
    <property type="project" value="UniProtKB-SubCell"/>
</dbReference>
<dbReference type="GO" id="GO:0020037">
    <property type="term" value="F:heme binding"/>
    <property type="evidence" value="ECO:0007669"/>
    <property type="project" value="InterPro"/>
</dbReference>
<dbReference type="GO" id="GO:0046872">
    <property type="term" value="F:metal ion binding"/>
    <property type="evidence" value="ECO:0007669"/>
    <property type="project" value="UniProtKB-KW"/>
</dbReference>
<dbReference type="GO" id="GO:0017004">
    <property type="term" value="P:cytochrome complex assembly"/>
    <property type="evidence" value="ECO:0007669"/>
    <property type="project" value="UniProtKB-KW"/>
</dbReference>
<dbReference type="Gene3D" id="2.40.50.140">
    <property type="entry name" value="Nucleic acid-binding proteins"/>
    <property type="match status" value="1"/>
</dbReference>
<dbReference type="HAMAP" id="MF_01959">
    <property type="entry name" value="CcmE"/>
    <property type="match status" value="1"/>
</dbReference>
<dbReference type="InterPro" id="IPR004329">
    <property type="entry name" value="CcmE"/>
</dbReference>
<dbReference type="InterPro" id="IPR036127">
    <property type="entry name" value="CcmE-like_sf"/>
</dbReference>
<dbReference type="InterPro" id="IPR012340">
    <property type="entry name" value="NA-bd_OB-fold"/>
</dbReference>
<dbReference type="NCBIfam" id="NF009727">
    <property type="entry name" value="PRK13254.1-1"/>
    <property type="match status" value="1"/>
</dbReference>
<dbReference type="NCBIfam" id="NF009728">
    <property type="entry name" value="PRK13254.1-2"/>
    <property type="match status" value="1"/>
</dbReference>
<dbReference type="PANTHER" id="PTHR34128">
    <property type="entry name" value="CYTOCHROME C-TYPE BIOGENESIS PROTEIN CCME HOMOLOG, MITOCHONDRIAL"/>
    <property type="match status" value="1"/>
</dbReference>
<dbReference type="PANTHER" id="PTHR34128:SF2">
    <property type="entry name" value="CYTOCHROME C-TYPE BIOGENESIS PROTEIN CCME HOMOLOG, MITOCHONDRIAL"/>
    <property type="match status" value="1"/>
</dbReference>
<dbReference type="Pfam" id="PF03100">
    <property type="entry name" value="CcmE"/>
    <property type="match status" value="1"/>
</dbReference>
<dbReference type="SUPFAM" id="SSF82093">
    <property type="entry name" value="Heme chaperone CcmE"/>
    <property type="match status" value="1"/>
</dbReference>
<accession>Q87BH5</accession>
<comment type="function">
    <text evidence="1">Heme chaperone required for the biogenesis of c-type cytochromes. Transiently binds heme delivered by CcmC and transfers the heme to apo-cytochromes in a process facilitated by CcmF and CcmH.</text>
</comment>
<comment type="subcellular location">
    <subcellularLocation>
        <location evidence="1">Cell inner membrane</location>
        <topology evidence="1">Single-pass type II membrane protein</topology>
        <orientation evidence="1">Periplasmic side</orientation>
    </subcellularLocation>
</comment>
<comment type="similarity">
    <text evidence="1">Belongs to the CcmE/CycJ family.</text>
</comment>
<gene>
    <name evidence="1" type="primary">ccmE</name>
    <name evidence="1" type="synonym">cycJ</name>
    <name type="ordered locus">PD_1478</name>
</gene>
<feature type="chain" id="PRO_0000238892" description="Cytochrome c-type biogenesis protein CcmE">
    <location>
        <begin position="1"/>
        <end position="153"/>
    </location>
</feature>
<feature type="topological domain" description="Cytoplasmic" evidence="1">
    <location>
        <begin position="1"/>
        <end position="6"/>
    </location>
</feature>
<feature type="transmembrane region" description="Helical; Signal-anchor for type II membrane protein" evidence="1">
    <location>
        <begin position="7"/>
        <end position="27"/>
    </location>
</feature>
<feature type="topological domain" description="Periplasmic" evidence="1">
    <location>
        <begin position="28"/>
        <end position="153"/>
    </location>
</feature>
<feature type="region of interest" description="Disordered" evidence="2">
    <location>
        <begin position="131"/>
        <end position="153"/>
    </location>
</feature>
<feature type="compositionally biased region" description="Polar residues" evidence="2">
    <location>
        <begin position="131"/>
        <end position="141"/>
    </location>
</feature>
<feature type="binding site" description="covalent" evidence="1">
    <location>
        <position position="121"/>
    </location>
    <ligand>
        <name>heme</name>
        <dbReference type="ChEBI" id="CHEBI:30413"/>
    </ligand>
</feature>
<feature type="binding site" description="axial binding residue" evidence="1">
    <location>
        <position position="125"/>
    </location>
    <ligand>
        <name>heme</name>
        <dbReference type="ChEBI" id="CHEBI:30413"/>
    </ligand>
    <ligandPart>
        <name>Fe</name>
        <dbReference type="ChEBI" id="CHEBI:18248"/>
    </ligandPart>
</feature>
<reference key="1">
    <citation type="journal article" date="2003" name="J. Bacteriol.">
        <title>Comparative analyses of the complete genome sequences of Pierce's disease and citrus variegated chlorosis strains of Xylella fastidiosa.</title>
        <authorList>
            <person name="Van Sluys M.A."/>
            <person name="de Oliveira M.C."/>
            <person name="Monteiro-Vitorello C.B."/>
            <person name="Miyaki C.Y."/>
            <person name="Furlan L.R."/>
            <person name="Camargo L.E.A."/>
            <person name="da Silva A.C.R."/>
            <person name="Moon D.H."/>
            <person name="Takita M.A."/>
            <person name="Lemos E.G.M."/>
            <person name="Machado M.A."/>
            <person name="Ferro M.I.T."/>
            <person name="da Silva F.R."/>
            <person name="Goldman M.H.S."/>
            <person name="Goldman G.H."/>
            <person name="Lemos M.V.F."/>
            <person name="El-Dorry H."/>
            <person name="Tsai S.M."/>
            <person name="Carrer H."/>
            <person name="Carraro D.M."/>
            <person name="de Oliveira R.C."/>
            <person name="Nunes L.R."/>
            <person name="Siqueira W.J."/>
            <person name="Coutinho L.L."/>
            <person name="Kimura E.T."/>
            <person name="Ferro E.S."/>
            <person name="Harakava R."/>
            <person name="Kuramae E.E."/>
            <person name="Marino C.L."/>
            <person name="Giglioti E."/>
            <person name="Abreu I.L."/>
            <person name="Alves L.M.C."/>
            <person name="do Amaral A.M."/>
            <person name="Baia G.S."/>
            <person name="Blanco S.R."/>
            <person name="Brito M.S."/>
            <person name="Cannavan F.S."/>
            <person name="Celestino A.V."/>
            <person name="da Cunha A.F."/>
            <person name="Fenille R.C."/>
            <person name="Ferro J.A."/>
            <person name="Formighieri E.F."/>
            <person name="Kishi L.T."/>
            <person name="Leoni S.G."/>
            <person name="Oliveira A.R."/>
            <person name="Rosa V.E. Jr."/>
            <person name="Sassaki F.T."/>
            <person name="Sena J.A.D."/>
            <person name="de Souza A.A."/>
            <person name="Truffi D."/>
            <person name="Tsukumo F."/>
            <person name="Yanai G.M."/>
            <person name="Zaros L.G."/>
            <person name="Civerolo E.L."/>
            <person name="Simpson A.J.G."/>
            <person name="Almeida N.F. Jr."/>
            <person name="Setubal J.C."/>
            <person name="Kitajima J.P."/>
        </authorList>
    </citation>
    <scope>NUCLEOTIDE SEQUENCE [LARGE SCALE GENOMIC DNA]</scope>
    <source>
        <strain>Temecula1 / ATCC 700964</strain>
    </source>
</reference>
<protein>
    <recommendedName>
        <fullName evidence="1">Cytochrome c-type biogenesis protein CcmE</fullName>
    </recommendedName>
    <alternativeName>
        <fullName evidence="1">Cytochrome c maturation protein E</fullName>
    </alternativeName>
    <alternativeName>
        <fullName evidence="1">Heme chaperone CcmE</fullName>
    </alternativeName>
</protein>
<sequence length="153" mass="17213">MNARRRLWSVLMLILAVGTAATLTIMALRHNLTYLYMPSEVLRGDTAQQTHFRLGGIVEKGSFQRTSGTLNTRFIVTDGNARLQVRYARILPDLFREGQAIVATGQMQHGTFIAENILARHNETYTPRQLANKMQPTPTQHTHLDTPIAETTP</sequence>
<name>CCME_XYLFT</name>
<organism>
    <name type="scientific">Xylella fastidiosa (strain Temecula1 / ATCC 700964)</name>
    <dbReference type="NCBI Taxonomy" id="183190"/>
    <lineage>
        <taxon>Bacteria</taxon>
        <taxon>Pseudomonadati</taxon>
        <taxon>Pseudomonadota</taxon>
        <taxon>Gammaproteobacteria</taxon>
        <taxon>Lysobacterales</taxon>
        <taxon>Lysobacteraceae</taxon>
        <taxon>Xylella</taxon>
    </lineage>
</organism>
<keyword id="KW-0997">Cell inner membrane</keyword>
<keyword id="KW-1003">Cell membrane</keyword>
<keyword id="KW-0201">Cytochrome c-type biogenesis</keyword>
<keyword id="KW-0349">Heme</keyword>
<keyword id="KW-0408">Iron</keyword>
<keyword id="KW-0472">Membrane</keyword>
<keyword id="KW-0479">Metal-binding</keyword>
<keyword id="KW-1185">Reference proteome</keyword>
<keyword id="KW-0735">Signal-anchor</keyword>
<keyword id="KW-0812">Transmembrane</keyword>
<keyword id="KW-1133">Transmembrane helix</keyword>
<evidence type="ECO:0000255" key="1">
    <source>
        <dbReference type="HAMAP-Rule" id="MF_01959"/>
    </source>
</evidence>
<evidence type="ECO:0000256" key="2">
    <source>
        <dbReference type="SAM" id="MobiDB-lite"/>
    </source>
</evidence>